<organism>
    <name type="scientific">Homo sapiens</name>
    <name type="common">Human</name>
    <dbReference type="NCBI Taxonomy" id="9606"/>
    <lineage>
        <taxon>Eukaryota</taxon>
        <taxon>Metazoa</taxon>
        <taxon>Chordata</taxon>
        <taxon>Craniata</taxon>
        <taxon>Vertebrata</taxon>
        <taxon>Euteleostomi</taxon>
        <taxon>Mammalia</taxon>
        <taxon>Eutheria</taxon>
        <taxon>Euarchontoglires</taxon>
        <taxon>Primates</taxon>
        <taxon>Haplorrhini</taxon>
        <taxon>Catarrhini</taxon>
        <taxon>Hominidae</taxon>
        <taxon>Homo</taxon>
    </lineage>
</organism>
<name>LY6H_HUMAN</name>
<comment type="function">
    <text evidence="2 5">Believed to act as a modulator of nicotinic acetylcholine receptors (nAChRs) activity. In vitro inhibits alpha-3:beta-4-containing nAChRs maximum response. May play a role in the intracellular trafficking of alpha-7-containing nAChRs and may inhibit their expression at the cell surface. Seems to inhibit alpha-7/CHRNA7 signaling in hippocampal neurons.</text>
</comment>
<comment type="subunit">
    <text evidence="5">Interacts with CHRNA4 and CHRNA7.</text>
</comment>
<comment type="interaction">
    <interactant intactId="EBI-724687">
        <id>O94772</id>
    </interactant>
    <interactant intactId="EBI-3958099">
        <id>P26371</id>
        <label>KRTAP5-9</label>
    </interactant>
    <organismsDiffer>false</organismsDiffer>
    <experiments>3</experiments>
</comment>
<comment type="subcellular location">
    <subcellularLocation>
        <location evidence="1">Cell membrane</location>
        <topology evidence="1">Lipid-anchor</topology>
        <topology evidence="1">GPI-anchor</topology>
    </subcellularLocation>
</comment>
<comment type="alternative products">
    <event type="alternative splicing"/>
    <isoform>
        <id>O94772-1</id>
        <name>1</name>
        <sequence type="displayed"/>
    </isoform>
    <isoform>
        <id>O94772-2</id>
        <name>2</name>
        <sequence type="described" ref="VSP_053497"/>
    </isoform>
</comment>
<comment type="tissue specificity">
    <text>Highly expressed in brain (cerebral cortex, amygdala, hippocampus and subthalamic nucleus) and in acute human leukemic cell line MOLT-3. Also found in lower levels in testis, pancreas, small intestine and colon.</text>
</comment>
<comment type="caution">
    <text evidence="8">It is uncertain whether Met-1 or Met-6 is the initiator.</text>
</comment>
<keyword id="KW-0025">Alternative splicing</keyword>
<keyword id="KW-1003">Cell membrane</keyword>
<keyword id="KW-1015">Disulfide bond</keyword>
<keyword id="KW-0325">Glycoprotein</keyword>
<keyword id="KW-0336">GPI-anchor</keyword>
<keyword id="KW-0449">Lipoprotein</keyword>
<keyword id="KW-0472">Membrane</keyword>
<keyword id="KW-1267">Proteomics identification</keyword>
<keyword id="KW-1185">Reference proteome</keyword>
<keyword id="KW-0732">Signal</keyword>
<protein>
    <recommendedName>
        <fullName>Lymphocyte antigen 6H</fullName>
        <shortName>Ly-6H</shortName>
    </recommendedName>
</protein>
<gene>
    <name type="primary">LY6H</name>
</gene>
<evidence type="ECO:0000250" key="1"/>
<evidence type="ECO:0000250" key="2">
    <source>
        <dbReference type="UniProtKB" id="F1LNW6"/>
    </source>
</evidence>
<evidence type="ECO:0000250" key="3">
    <source>
        <dbReference type="UniProtKB" id="P0DP57"/>
    </source>
</evidence>
<evidence type="ECO:0000250" key="4">
    <source>
        <dbReference type="UniProtKB" id="P0DP58"/>
    </source>
</evidence>
<evidence type="ECO:0000250" key="5">
    <source>
        <dbReference type="UniProtKB" id="Q9WUC3"/>
    </source>
</evidence>
<evidence type="ECO:0000255" key="6"/>
<evidence type="ECO:0000303" key="7">
    <source ref="2"/>
</evidence>
<evidence type="ECO:0000305" key="8"/>
<dbReference type="EMBL" id="AB012293">
    <property type="protein sequence ID" value="BAA34115.1"/>
    <property type="molecule type" value="mRNA"/>
</dbReference>
<dbReference type="EMBL" id="BX419752">
    <property type="status" value="NOT_ANNOTATED_CDS"/>
    <property type="molecule type" value="mRNA"/>
</dbReference>
<dbReference type="EMBL" id="CR457034">
    <property type="protein sequence ID" value="CAG33315.1"/>
    <property type="molecule type" value="mRNA"/>
</dbReference>
<dbReference type="EMBL" id="AK314139">
    <property type="protein sequence ID" value="BAG36829.1"/>
    <property type="molecule type" value="mRNA"/>
</dbReference>
<dbReference type="EMBL" id="AC083982">
    <property type="status" value="NOT_ANNOTATED_CDS"/>
    <property type="molecule type" value="Genomic_DNA"/>
</dbReference>
<dbReference type="EMBL" id="CH471162">
    <property type="protein sequence ID" value="EAW82277.1"/>
    <property type="molecule type" value="Genomic_DNA"/>
</dbReference>
<dbReference type="EMBL" id="BC028894">
    <property type="protein sequence ID" value="AAH28894.1"/>
    <property type="molecule type" value="mRNA"/>
</dbReference>
<dbReference type="EMBL" id="BC030192">
    <property type="protein sequence ID" value="AAH30192.1"/>
    <property type="molecule type" value="mRNA"/>
</dbReference>
<dbReference type="CCDS" id="CCDS47926.1">
    <molecule id="O94772-2"/>
</dbReference>
<dbReference type="CCDS" id="CCDS6396.1">
    <molecule id="O94772-1"/>
</dbReference>
<dbReference type="RefSeq" id="NP_001123950.1">
    <molecule id="O94772-2"/>
    <property type="nucleotide sequence ID" value="NM_001130478.2"/>
</dbReference>
<dbReference type="RefSeq" id="NP_001129127.1">
    <molecule id="O94772-2"/>
    <property type="nucleotide sequence ID" value="NM_001135655.2"/>
</dbReference>
<dbReference type="RefSeq" id="NP_002338.3">
    <molecule id="O94772-1"/>
    <property type="nucleotide sequence ID" value="NM_002347.5"/>
</dbReference>
<dbReference type="RefSeq" id="XP_016868903.1">
    <property type="nucleotide sequence ID" value="XM_017013414.1"/>
</dbReference>
<dbReference type="RefSeq" id="XP_047277738.1">
    <molecule id="O94772-1"/>
    <property type="nucleotide sequence ID" value="XM_047421782.1"/>
</dbReference>
<dbReference type="RefSeq" id="XP_054184760.1">
    <molecule id="O94772-1"/>
    <property type="nucleotide sequence ID" value="XM_054328785.1"/>
</dbReference>
<dbReference type="RefSeq" id="XP_054216451.1">
    <molecule id="O94772-1"/>
    <property type="nucleotide sequence ID" value="XM_054360476.1"/>
</dbReference>
<dbReference type="BioGRID" id="110240">
    <property type="interactions" value="71"/>
</dbReference>
<dbReference type="FunCoup" id="O94772">
    <property type="interactions" value="59"/>
</dbReference>
<dbReference type="IntAct" id="O94772">
    <property type="interactions" value="60"/>
</dbReference>
<dbReference type="STRING" id="9606.ENSP00000399485"/>
<dbReference type="GlyCosmos" id="O94772">
    <property type="glycosylation" value="1 site, No reported glycans"/>
</dbReference>
<dbReference type="GlyGen" id="O94772">
    <property type="glycosylation" value="1 site"/>
</dbReference>
<dbReference type="iPTMnet" id="O94772"/>
<dbReference type="PhosphoSitePlus" id="O94772"/>
<dbReference type="SwissPalm" id="O94772"/>
<dbReference type="BioMuta" id="LY6H"/>
<dbReference type="MassIVE" id="O94772"/>
<dbReference type="PaxDb" id="9606-ENSP00000399485"/>
<dbReference type="PeptideAtlas" id="O94772"/>
<dbReference type="ProteomicsDB" id="50435">
    <molecule id="O94772-1"/>
</dbReference>
<dbReference type="Antibodypedia" id="27844">
    <property type="antibodies" value="69 antibodies from 16 providers"/>
</dbReference>
<dbReference type="DNASU" id="4062"/>
<dbReference type="Ensembl" id="ENST00000342752.9">
    <molecule id="O94772-2"/>
    <property type="protein sequence ID" value="ENSP00000342711.4"/>
    <property type="gene ID" value="ENSG00000176956.13"/>
</dbReference>
<dbReference type="Ensembl" id="ENST00000414417.6">
    <molecule id="O94772-2"/>
    <property type="protein sequence ID" value="ENSP00000399485.2"/>
    <property type="gene ID" value="ENSG00000176956.13"/>
</dbReference>
<dbReference type="Ensembl" id="ENST00000430474.6">
    <molecule id="O94772-1"/>
    <property type="protein sequence ID" value="ENSP00000409899.2"/>
    <property type="gene ID" value="ENSG00000176956.13"/>
</dbReference>
<dbReference type="Ensembl" id="ENST00000610554.2">
    <molecule id="O94772-1"/>
    <property type="protein sequence ID" value="ENSP00000478470.1"/>
    <property type="gene ID" value="ENSG00000274488.4"/>
</dbReference>
<dbReference type="Ensembl" id="ENST00000615409.1">
    <molecule id="O94772-1"/>
    <property type="protein sequence ID" value="ENSP00000480084.1"/>
    <property type="gene ID" value="ENSG00000176956.13"/>
</dbReference>
<dbReference type="Ensembl" id="ENST00000615434.4">
    <molecule id="O94772-2"/>
    <property type="protein sequence ID" value="ENSP00000482094.2"/>
    <property type="gene ID" value="ENSG00000274488.4"/>
</dbReference>
<dbReference type="Ensembl" id="ENST00000631670.1">
    <molecule id="O94772-2"/>
    <property type="protein sequence ID" value="ENSP00000487965.1"/>
    <property type="gene ID" value="ENSG00000274488.4"/>
</dbReference>
<dbReference type="GeneID" id="4062"/>
<dbReference type="KEGG" id="hsa:4062"/>
<dbReference type="MANE-Select" id="ENST00000342752.9">
    <molecule id="O94772-2"/>
    <property type="protein sequence ID" value="ENSP00000342711.4"/>
    <property type="RefSeq nucleotide sequence ID" value="NM_001135655.2"/>
    <property type="RefSeq protein sequence ID" value="NP_001129127.1"/>
</dbReference>
<dbReference type="UCSC" id="uc011lka.2">
    <molecule id="O94772-1"/>
    <property type="organism name" value="human"/>
</dbReference>
<dbReference type="AGR" id="HGNC:6728"/>
<dbReference type="CTD" id="4062"/>
<dbReference type="DisGeNET" id="4062"/>
<dbReference type="GeneCards" id="LY6H"/>
<dbReference type="HGNC" id="HGNC:6728">
    <property type="gene designation" value="LY6H"/>
</dbReference>
<dbReference type="HPA" id="ENSG00000176956">
    <property type="expression patterns" value="Tissue enriched (brain)"/>
</dbReference>
<dbReference type="MIM" id="603625">
    <property type="type" value="gene"/>
</dbReference>
<dbReference type="neXtProt" id="NX_O94772"/>
<dbReference type="OpenTargets" id="ENSG00000176956"/>
<dbReference type="PharmGKB" id="PA30492"/>
<dbReference type="VEuPathDB" id="HostDB:ENSG00000176956"/>
<dbReference type="eggNOG" id="ENOG502RVP9">
    <property type="taxonomic scope" value="Eukaryota"/>
</dbReference>
<dbReference type="GeneTree" id="ENSGT00940000154560"/>
<dbReference type="HOGENOM" id="CLU_106772_1_1_1"/>
<dbReference type="InParanoid" id="O94772"/>
<dbReference type="OMA" id="DVECCEK"/>
<dbReference type="OrthoDB" id="9620902at2759"/>
<dbReference type="PAN-GO" id="O94772">
    <property type="GO annotations" value="4 GO annotations based on evolutionary models"/>
</dbReference>
<dbReference type="PhylomeDB" id="O94772"/>
<dbReference type="TreeFam" id="TF337757"/>
<dbReference type="PathwayCommons" id="O94772"/>
<dbReference type="Reactome" id="R-HSA-163125">
    <property type="pathway name" value="Post-translational modification: synthesis of GPI-anchored proteins"/>
</dbReference>
<dbReference type="SignaLink" id="O94772"/>
<dbReference type="BioGRID-ORCS" id="4062">
    <property type="hits" value="7 hits in 1142 CRISPR screens"/>
</dbReference>
<dbReference type="CD-CODE" id="FB4E32DD">
    <property type="entry name" value="Presynaptic clusters and postsynaptic densities"/>
</dbReference>
<dbReference type="GenomeRNAi" id="4062"/>
<dbReference type="Pharos" id="O94772">
    <property type="development level" value="Tbio"/>
</dbReference>
<dbReference type="PRO" id="PR:O94772"/>
<dbReference type="Proteomes" id="UP000005640">
    <property type="component" value="Chromosome 8"/>
</dbReference>
<dbReference type="RNAct" id="O94772">
    <property type="molecule type" value="protein"/>
</dbReference>
<dbReference type="Bgee" id="ENSG00000176956">
    <property type="expression patterns" value="Expressed in Ammon's horn and 91 other cell types or tissues"/>
</dbReference>
<dbReference type="GO" id="GO:0005576">
    <property type="term" value="C:extracellular region"/>
    <property type="evidence" value="ECO:0000304"/>
    <property type="project" value="Reactome"/>
</dbReference>
<dbReference type="GO" id="GO:0005886">
    <property type="term" value="C:plasma membrane"/>
    <property type="evidence" value="ECO:0000318"/>
    <property type="project" value="GO_Central"/>
</dbReference>
<dbReference type="GO" id="GO:0098552">
    <property type="term" value="C:side of membrane"/>
    <property type="evidence" value="ECO:0007669"/>
    <property type="project" value="UniProtKB-KW"/>
</dbReference>
<dbReference type="GO" id="GO:0045202">
    <property type="term" value="C:synapse"/>
    <property type="evidence" value="ECO:0007669"/>
    <property type="project" value="GOC"/>
</dbReference>
<dbReference type="GO" id="GO:0033130">
    <property type="term" value="F:acetylcholine receptor binding"/>
    <property type="evidence" value="ECO:0000318"/>
    <property type="project" value="GO_Central"/>
</dbReference>
<dbReference type="GO" id="GO:0030550">
    <property type="term" value="F:acetylcholine receptor inhibitor activity"/>
    <property type="evidence" value="ECO:0000318"/>
    <property type="project" value="GO_Central"/>
</dbReference>
<dbReference type="GO" id="GO:0095500">
    <property type="term" value="P:acetylcholine receptor signaling pathway"/>
    <property type="evidence" value="ECO:0000318"/>
    <property type="project" value="GO_Central"/>
</dbReference>
<dbReference type="GO" id="GO:0009887">
    <property type="term" value="P:animal organ morphogenesis"/>
    <property type="evidence" value="ECO:0000304"/>
    <property type="project" value="ProtInc"/>
</dbReference>
<dbReference type="GO" id="GO:0007399">
    <property type="term" value="P:nervous system development"/>
    <property type="evidence" value="ECO:0000304"/>
    <property type="project" value="ProtInc"/>
</dbReference>
<dbReference type="CDD" id="cd23549">
    <property type="entry name" value="TFP_LU_ECD_Ly6H"/>
    <property type="match status" value="1"/>
</dbReference>
<dbReference type="FunFam" id="2.10.60.10:FF:000011">
    <property type="entry name" value="lymphocyte antigen 6H isoform X1"/>
    <property type="match status" value="1"/>
</dbReference>
<dbReference type="Gene3D" id="2.10.60.10">
    <property type="entry name" value="CD59"/>
    <property type="match status" value="1"/>
</dbReference>
<dbReference type="InterPro" id="IPR016054">
    <property type="entry name" value="LY6_UPA_recep-like"/>
</dbReference>
<dbReference type="InterPro" id="IPR051445">
    <property type="entry name" value="LY6H/LY6L_nAChR_modulators"/>
</dbReference>
<dbReference type="InterPro" id="IPR045860">
    <property type="entry name" value="Snake_toxin-like_sf"/>
</dbReference>
<dbReference type="PANTHER" id="PTHR32217">
    <property type="entry name" value="LYMPHOCYTE ANTIGEN 6H"/>
    <property type="match status" value="1"/>
</dbReference>
<dbReference type="PANTHER" id="PTHR32217:SF5">
    <property type="entry name" value="LYMPHOCYTE ANTIGEN 6H"/>
    <property type="match status" value="1"/>
</dbReference>
<dbReference type="Pfam" id="PF00021">
    <property type="entry name" value="UPAR_LY6"/>
    <property type="match status" value="1"/>
</dbReference>
<dbReference type="SMART" id="SM00134">
    <property type="entry name" value="LU"/>
    <property type="match status" value="1"/>
</dbReference>
<dbReference type="SUPFAM" id="SSF57302">
    <property type="entry name" value="Snake toxin-like"/>
    <property type="match status" value="1"/>
</dbReference>
<accession>O94772</accession>
<accession>B2RAD2</accession>
<accession>J3KQI0</accession>
<accession>Q6IAX0</accession>
<reference key="1">
    <citation type="journal article" date="1998" name="Genomics">
        <title>Isolation and characterization of a new member of the human Ly6 gene family (LY6H).</title>
        <authorList>
            <person name="Horie M."/>
            <person name="Okutomi K."/>
            <person name="Taniguchi Y."/>
            <person name="Ohbuchi Y."/>
            <person name="Suzuki M."/>
            <person name="Takahashi E."/>
        </authorList>
    </citation>
    <scope>NUCLEOTIDE SEQUENCE [MRNA] (ISOFORM 1)</scope>
    <source>
        <tissue>Fetal brain</tissue>
    </source>
</reference>
<reference key="2">
    <citation type="submission" date="2003-04" db="EMBL/GenBank/DDBJ databases">
        <title>Full-length cDNA libraries and normalization.</title>
        <authorList>
            <person name="Li W.B."/>
            <person name="Gruber C."/>
            <person name="Jessee J."/>
            <person name="Polayes D."/>
        </authorList>
    </citation>
    <scope>NUCLEOTIDE SEQUENCE [LARGE SCALE MRNA] (ISOFORM 2)</scope>
    <source>
        <tissue>Fetal brain</tissue>
    </source>
</reference>
<reference key="3">
    <citation type="submission" date="2004-06" db="EMBL/GenBank/DDBJ databases">
        <title>Cloning of human full open reading frames in Gateway(TM) system entry vector (pDONR201).</title>
        <authorList>
            <person name="Ebert L."/>
            <person name="Schick M."/>
            <person name="Neubert P."/>
            <person name="Schatten R."/>
            <person name="Henze S."/>
            <person name="Korn B."/>
        </authorList>
    </citation>
    <scope>NUCLEOTIDE SEQUENCE [LARGE SCALE MRNA] (ISOFORM 1)</scope>
</reference>
<reference key="4">
    <citation type="journal article" date="2004" name="Nat. Genet.">
        <title>Complete sequencing and characterization of 21,243 full-length human cDNAs.</title>
        <authorList>
            <person name="Ota T."/>
            <person name="Suzuki Y."/>
            <person name="Nishikawa T."/>
            <person name="Otsuki T."/>
            <person name="Sugiyama T."/>
            <person name="Irie R."/>
            <person name="Wakamatsu A."/>
            <person name="Hayashi K."/>
            <person name="Sato H."/>
            <person name="Nagai K."/>
            <person name="Kimura K."/>
            <person name="Makita H."/>
            <person name="Sekine M."/>
            <person name="Obayashi M."/>
            <person name="Nishi T."/>
            <person name="Shibahara T."/>
            <person name="Tanaka T."/>
            <person name="Ishii S."/>
            <person name="Yamamoto J."/>
            <person name="Saito K."/>
            <person name="Kawai Y."/>
            <person name="Isono Y."/>
            <person name="Nakamura Y."/>
            <person name="Nagahari K."/>
            <person name="Murakami K."/>
            <person name="Yasuda T."/>
            <person name="Iwayanagi T."/>
            <person name="Wagatsuma M."/>
            <person name="Shiratori A."/>
            <person name="Sudo H."/>
            <person name="Hosoiri T."/>
            <person name="Kaku Y."/>
            <person name="Kodaira H."/>
            <person name="Kondo H."/>
            <person name="Sugawara M."/>
            <person name="Takahashi M."/>
            <person name="Kanda K."/>
            <person name="Yokoi T."/>
            <person name="Furuya T."/>
            <person name="Kikkawa E."/>
            <person name="Omura Y."/>
            <person name="Abe K."/>
            <person name="Kamihara K."/>
            <person name="Katsuta N."/>
            <person name="Sato K."/>
            <person name="Tanikawa M."/>
            <person name="Yamazaki M."/>
            <person name="Ninomiya K."/>
            <person name="Ishibashi T."/>
            <person name="Yamashita H."/>
            <person name="Murakawa K."/>
            <person name="Fujimori K."/>
            <person name="Tanai H."/>
            <person name="Kimata M."/>
            <person name="Watanabe M."/>
            <person name="Hiraoka S."/>
            <person name="Chiba Y."/>
            <person name="Ishida S."/>
            <person name="Ono Y."/>
            <person name="Takiguchi S."/>
            <person name="Watanabe S."/>
            <person name="Yosida M."/>
            <person name="Hotuta T."/>
            <person name="Kusano J."/>
            <person name="Kanehori K."/>
            <person name="Takahashi-Fujii A."/>
            <person name="Hara H."/>
            <person name="Tanase T.-O."/>
            <person name="Nomura Y."/>
            <person name="Togiya S."/>
            <person name="Komai F."/>
            <person name="Hara R."/>
            <person name="Takeuchi K."/>
            <person name="Arita M."/>
            <person name="Imose N."/>
            <person name="Musashino K."/>
            <person name="Yuuki H."/>
            <person name="Oshima A."/>
            <person name="Sasaki N."/>
            <person name="Aotsuka S."/>
            <person name="Yoshikawa Y."/>
            <person name="Matsunawa H."/>
            <person name="Ichihara T."/>
            <person name="Shiohata N."/>
            <person name="Sano S."/>
            <person name="Moriya S."/>
            <person name="Momiyama H."/>
            <person name="Satoh N."/>
            <person name="Takami S."/>
            <person name="Terashima Y."/>
            <person name="Suzuki O."/>
            <person name="Nakagawa S."/>
            <person name="Senoh A."/>
            <person name="Mizoguchi H."/>
            <person name="Goto Y."/>
            <person name="Shimizu F."/>
            <person name="Wakebe H."/>
            <person name="Hishigaki H."/>
            <person name="Watanabe T."/>
            <person name="Sugiyama A."/>
            <person name="Takemoto M."/>
            <person name="Kawakami B."/>
            <person name="Yamazaki M."/>
            <person name="Watanabe K."/>
            <person name="Kumagai A."/>
            <person name="Itakura S."/>
            <person name="Fukuzumi Y."/>
            <person name="Fujimori Y."/>
            <person name="Komiyama M."/>
            <person name="Tashiro H."/>
            <person name="Tanigami A."/>
            <person name="Fujiwara T."/>
            <person name="Ono T."/>
            <person name="Yamada K."/>
            <person name="Fujii Y."/>
            <person name="Ozaki K."/>
            <person name="Hirao M."/>
            <person name="Ohmori Y."/>
            <person name="Kawabata A."/>
            <person name="Hikiji T."/>
            <person name="Kobatake N."/>
            <person name="Inagaki H."/>
            <person name="Ikema Y."/>
            <person name="Okamoto S."/>
            <person name="Okitani R."/>
            <person name="Kawakami T."/>
            <person name="Noguchi S."/>
            <person name="Itoh T."/>
            <person name="Shigeta K."/>
            <person name="Senba T."/>
            <person name="Matsumura K."/>
            <person name="Nakajima Y."/>
            <person name="Mizuno T."/>
            <person name="Morinaga M."/>
            <person name="Sasaki M."/>
            <person name="Togashi T."/>
            <person name="Oyama M."/>
            <person name="Hata H."/>
            <person name="Watanabe M."/>
            <person name="Komatsu T."/>
            <person name="Mizushima-Sugano J."/>
            <person name="Satoh T."/>
            <person name="Shirai Y."/>
            <person name="Takahashi Y."/>
            <person name="Nakagawa K."/>
            <person name="Okumura K."/>
            <person name="Nagase T."/>
            <person name="Nomura N."/>
            <person name="Kikuchi H."/>
            <person name="Masuho Y."/>
            <person name="Yamashita R."/>
            <person name="Nakai K."/>
            <person name="Yada T."/>
            <person name="Nakamura Y."/>
            <person name="Ohara O."/>
            <person name="Isogai T."/>
            <person name="Sugano S."/>
        </authorList>
    </citation>
    <scope>NUCLEOTIDE SEQUENCE [LARGE SCALE MRNA] (ISOFORM 1)</scope>
    <source>
        <tissue>Brain</tissue>
    </source>
</reference>
<reference key="5">
    <citation type="journal article" date="2006" name="Nature">
        <title>DNA sequence and analysis of human chromosome 8.</title>
        <authorList>
            <person name="Nusbaum C."/>
            <person name="Mikkelsen T.S."/>
            <person name="Zody M.C."/>
            <person name="Asakawa S."/>
            <person name="Taudien S."/>
            <person name="Garber M."/>
            <person name="Kodira C.D."/>
            <person name="Schueler M.G."/>
            <person name="Shimizu A."/>
            <person name="Whittaker C.A."/>
            <person name="Chang J.L."/>
            <person name="Cuomo C.A."/>
            <person name="Dewar K."/>
            <person name="FitzGerald M.G."/>
            <person name="Yang X."/>
            <person name="Allen N.R."/>
            <person name="Anderson S."/>
            <person name="Asakawa T."/>
            <person name="Blechschmidt K."/>
            <person name="Bloom T."/>
            <person name="Borowsky M.L."/>
            <person name="Butler J."/>
            <person name="Cook A."/>
            <person name="Corum B."/>
            <person name="DeArellano K."/>
            <person name="DeCaprio D."/>
            <person name="Dooley K.T."/>
            <person name="Dorris L. III"/>
            <person name="Engels R."/>
            <person name="Gloeckner G."/>
            <person name="Hafez N."/>
            <person name="Hagopian D.S."/>
            <person name="Hall J.L."/>
            <person name="Ishikawa S.K."/>
            <person name="Jaffe D.B."/>
            <person name="Kamat A."/>
            <person name="Kudoh J."/>
            <person name="Lehmann R."/>
            <person name="Lokitsang T."/>
            <person name="Macdonald P."/>
            <person name="Major J.E."/>
            <person name="Matthews C.D."/>
            <person name="Mauceli E."/>
            <person name="Menzel U."/>
            <person name="Mihalev A.H."/>
            <person name="Minoshima S."/>
            <person name="Murayama Y."/>
            <person name="Naylor J.W."/>
            <person name="Nicol R."/>
            <person name="Nguyen C."/>
            <person name="O'Leary S.B."/>
            <person name="O'Neill K."/>
            <person name="Parker S.C.J."/>
            <person name="Polley A."/>
            <person name="Raymond C.K."/>
            <person name="Reichwald K."/>
            <person name="Rodriguez J."/>
            <person name="Sasaki T."/>
            <person name="Schilhabel M."/>
            <person name="Siddiqui R."/>
            <person name="Smith C.L."/>
            <person name="Sneddon T.P."/>
            <person name="Talamas J.A."/>
            <person name="Tenzin P."/>
            <person name="Topham K."/>
            <person name="Venkataraman V."/>
            <person name="Wen G."/>
            <person name="Yamazaki S."/>
            <person name="Young S.K."/>
            <person name="Zeng Q."/>
            <person name="Zimmer A.R."/>
            <person name="Rosenthal A."/>
            <person name="Birren B.W."/>
            <person name="Platzer M."/>
            <person name="Shimizu N."/>
            <person name="Lander E.S."/>
        </authorList>
    </citation>
    <scope>NUCLEOTIDE SEQUENCE [LARGE SCALE GENOMIC DNA]</scope>
</reference>
<reference key="6">
    <citation type="submission" date="2005-09" db="EMBL/GenBank/DDBJ databases">
        <authorList>
            <person name="Mural R.J."/>
            <person name="Istrail S."/>
            <person name="Sutton G.G."/>
            <person name="Florea L."/>
            <person name="Halpern A.L."/>
            <person name="Mobarry C.M."/>
            <person name="Lippert R."/>
            <person name="Walenz B."/>
            <person name="Shatkay H."/>
            <person name="Dew I."/>
            <person name="Miller J.R."/>
            <person name="Flanigan M.J."/>
            <person name="Edwards N.J."/>
            <person name="Bolanos R."/>
            <person name="Fasulo D."/>
            <person name="Halldorsson B.V."/>
            <person name="Hannenhalli S."/>
            <person name="Turner R."/>
            <person name="Yooseph S."/>
            <person name="Lu F."/>
            <person name="Nusskern D.R."/>
            <person name="Shue B.C."/>
            <person name="Zheng X.H."/>
            <person name="Zhong F."/>
            <person name="Delcher A.L."/>
            <person name="Huson D.H."/>
            <person name="Kravitz S.A."/>
            <person name="Mouchard L."/>
            <person name="Reinert K."/>
            <person name="Remington K.A."/>
            <person name="Clark A.G."/>
            <person name="Waterman M.S."/>
            <person name="Eichler E.E."/>
            <person name="Adams M.D."/>
            <person name="Hunkapiller M.W."/>
            <person name="Myers E.W."/>
            <person name="Venter J.C."/>
        </authorList>
    </citation>
    <scope>NUCLEOTIDE SEQUENCE [LARGE SCALE GENOMIC DNA]</scope>
</reference>
<reference key="7">
    <citation type="journal article" date="2004" name="Genome Res.">
        <title>The status, quality, and expansion of the NIH full-length cDNA project: the Mammalian Gene Collection (MGC).</title>
        <authorList>
            <consortium name="The MGC Project Team"/>
        </authorList>
    </citation>
    <scope>NUCLEOTIDE SEQUENCE [LARGE SCALE MRNA] (ISOFORM 1)</scope>
    <source>
        <tissue>Brain</tissue>
    </source>
</reference>
<proteinExistence type="evidence at protein level"/>
<feature type="signal peptide" evidence="6">
    <location>
        <begin position="1"/>
        <end position="25"/>
    </location>
</feature>
<feature type="chain" id="PRO_0000036148" description="Lymphocyte antigen 6H">
    <location>
        <begin position="26"/>
        <end position="115"/>
    </location>
</feature>
<feature type="propeptide" id="PRO_0000036149" description="Removed in mature form" evidence="6">
    <location>
        <begin position="116"/>
        <end position="140"/>
    </location>
</feature>
<feature type="domain" description="UPAR/Ly6">
    <location>
        <begin position="26"/>
        <end position="91"/>
    </location>
</feature>
<feature type="lipid moiety-binding region" description="GPI-anchor amidated glycine" evidence="6">
    <location>
        <position position="115"/>
    </location>
</feature>
<feature type="glycosylation site" description="N-linked (GlcNAc...) asparagine" evidence="6">
    <location>
        <position position="36"/>
    </location>
</feature>
<feature type="disulfide bond" evidence="3 4">
    <location>
        <begin position="28"/>
        <end position="52"/>
    </location>
</feature>
<feature type="disulfide bond" evidence="3 4">
    <location>
        <begin position="31"/>
        <end position="40"/>
    </location>
</feature>
<feature type="disulfide bond" evidence="3 4">
    <location>
        <begin position="45"/>
        <end position="73"/>
    </location>
</feature>
<feature type="disulfide bond" evidence="3 4">
    <location>
        <begin position="77"/>
        <end position="104"/>
    </location>
</feature>
<feature type="disulfide bond" evidence="3 4">
    <location>
        <begin position="105"/>
        <end position="110"/>
    </location>
</feature>
<feature type="splice variant" id="VSP_053497" description="In isoform 2." evidence="7">
    <original>M</original>
    <variation>MLAPQRTRAPSPRAAPRPTRSM</variation>
    <location>
        <position position="1"/>
    </location>
</feature>
<feature type="sequence conflict" description="In Ref. 3; CAG33315." evidence="8" ref="3">
    <original>A</original>
    <variation>T</variation>
    <location>
        <position position="4"/>
    </location>
</feature>
<sequence length="140" mass="14669">MLPAAMKGLGLALLAVLLCSAPAHGLWCQDCTLTTNSSHCTPKQCQPSDTVCASVRITDPSSSRKDHSVNKMCASSCDFVKRHFFSDYLMGFINSGILKVDVDCCEKDLCNGAAGAGHSPWALAGGLLLSLGPALLWAGP</sequence>